<accession>Q8FLV6</accession>
<gene>
    <name evidence="1" type="primary">ldh</name>
    <name type="ordered locus">CE2753</name>
</gene>
<reference key="1">
    <citation type="journal article" date="2003" name="Genome Res.">
        <title>Comparative complete genome sequence analysis of the amino acid replacements responsible for the thermostability of Corynebacterium efficiens.</title>
        <authorList>
            <person name="Nishio Y."/>
            <person name="Nakamura Y."/>
            <person name="Kawarabayasi Y."/>
            <person name="Usuda Y."/>
            <person name="Kimura E."/>
            <person name="Sugimoto S."/>
            <person name="Matsui K."/>
            <person name="Yamagishi A."/>
            <person name="Kikuchi H."/>
            <person name="Ikeo K."/>
            <person name="Gojobori T."/>
        </authorList>
    </citation>
    <scope>NUCLEOTIDE SEQUENCE [LARGE SCALE GENOMIC DNA]</scope>
    <source>
        <strain>DSM 44549 / YS-314 / AJ 12310 / JCM 11189 / NBRC 100395</strain>
    </source>
</reference>
<keyword id="KW-0021">Allosteric enzyme</keyword>
<keyword id="KW-0963">Cytoplasm</keyword>
<keyword id="KW-0520">NAD</keyword>
<keyword id="KW-0560">Oxidoreductase</keyword>
<keyword id="KW-0597">Phosphoprotein</keyword>
<keyword id="KW-1185">Reference proteome</keyword>
<sequence length="317" mass="34784">MRFVGNRVVLIGAGDVGVAYAYALVNQGIADELCIIDIDEKKLEGNVMDLSHGVVWAGKRTKVRKGTYSDCEDAAMVVICAGAAQKPGETRLQLVDKNVNIMHTIVDEVMANGFDGLFLVATNPVDILTYAVWKFSGLDHSRVIGSGTVLDTARFRYMLGELYDVSPKSIHAYIIGEHGDTELPVLSSATIAGVSMRKMLEKDPELEPRLEKIFEDTRDAAYRIIDAKGSTSYGIGMGLARITRAILNNQDVALPVSAYLEGQYGEEDIYIGTPAIIDRSGIHRVVELEISDREMSRFKHSAQTLRAIKDEIFPVGE</sequence>
<evidence type="ECO:0000255" key="1">
    <source>
        <dbReference type="HAMAP-Rule" id="MF_00488"/>
    </source>
</evidence>
<evidence type="ECO:0000305" key="2"/>
<proteinExistence type="inferred from homology"/>
<protein>
    <recommendedName>
        <fullName evidence="1">L-lactate dehydrogenase</fullName>
        <shortName evidence="1">L-LDH</shortName>
        <ecNumber evidence="1">1.1.1.27</ecNumber>
    </recommendedName>
</protein>
<feature type="chain" id="PRO_0000168339" description="L-lactate dehydrogenase">
    <location>
        <begin position="1"/>
        <end position="317"/>
    </location>
</feature>
<feature type="active site" description="Proton acceptor" evidence="1">
    <location>
        <position position="178"/>
    </location>
</feature>
<feature type="binding site" evidence="1">
    <location>
        <position position="16"/>
    </location>
    <ligand>
        <name>NAD(+)</name>
        <dbReference type="ChEBI" id="CHEBI:57540"/>
    </ligand>
</feature>
<feature type="binding site" evidence="1">
    <location>
        <position position="37"/>
    </location>
    <ligand>
        <name>NAD(+)</name>
        <dbReference type="ChEBI" id="CHEBI:57540"/>
    </ligand>
</feature>
<feature type="binding site" evidence="1">
    <location>
        <position position="42"/>
    </location>
    <ligand>
        <name>NAD(+)</name>
        <dbReference type="ChEBI" id="CHEBI:57540"/>
    </ligand>
</feature>
<feature type="binding site" evidence="1">
    <location>
        <position position="68"/>
    </location>
    <ligand>
        <name>NAD(+)</name>
        <dbReference type="ChEBI" id="CHEBI:57540"/>
    </ligand>
</feature>
<feature type="binding site" evidence="1">
    <location>
        <begin position="82"/>
        <end position="83"/>
    </location>
    <ligand>
        <name>NAD(+)</name>
        <dbReference type="ChEBI" id="CHEBI:57540"/>
    </ligand>
</feature>
<feature type="binding site" evidence="1">
    <location>
        <position position="85"/>
    </location>
    <ligand>
        <name>substrate</name>
    </ligand>
</feature>
<feature type="binding site" evidence="1">
    <location>
        <position position="91"/>
    </location>
    <ligand>
        <name>substrate</name>
    </ligand>
</feature>
<feature type="binding site" evidence="1">
    <location>
        <position position="104"/>
    </location>
    <ligand>
        <name>NAD(+)</name>
        <dbReference type="ChEBI" id="CHEBI:57540"/>
    </ligand>
</feature>
<feature type="binding site" evidence="1">
    <location>
        <begin position="121"/>
        <end position="123"/>
    </location>
    <ligand>
        <name>NAD(+)</name>
        <dbReference type="ChEBI" id="CHEBI:57540"/>
    </ligand>
</feature>
<feature type="binding site" evidence="1">
    <location>
        <begin position="123"/>
        <end position="126"/>
    </location>
    <ligand>
        <name>substrate</name>
    </ligand>
</feature>
<feature type="binding site" evidence="1">
    <location>
        <position position="146"/>
    </location>
    <ligand>
        <name>NAD(+)</name>
        <dbReference type="ChEBI" id="CHEBI:57540"/>
    </ligand>
</feature>
<feature type="binding site" evidence="1">
    <location>
        <begin position="151"/>
        <end position="154"/>
    </location>
    <ligand>
        <name>substrate</name>
    </ligand>
</feature>
<feature type="binding site" evidence="1">
    <location>
        <position position="156"/>
    </location>
    <ligand>
        <name>beta-D-fructose 1,6-bisphosphate</name>
        <dbReference type="ChEBI" id="CHEBI:32966"/>
        <note>allosteric activator</note>
    </ligand>
</feature>
<feature type="binding site" evidence="1">
    <location>
        <position position="171"/>
    </location>
    <ligand>
        <name>beta-D-fructose 1,6-bisphosphate</name>
        <dbReference type="ChEBI" id="CHEBI:32966"/>
        <note>allosteric activator</note>
    </ligand>
</feature>
<feature type="binding site" evidence="1">
    <location>
        <position position="231"/>
    </location>
    <ligand>
        <name>substrate</name>
    </ligand>
</feature>
<feature type="modified residue" description="Phosphotyrosine" evidence="1">
    <location>
        <position position="222"/>
    </location>
</feature>
<name>LDH_COREF</name>
<comment type="function">
    <text evidence="1">Catalyzes the conversion of lactate to pyruvate.</text>
</comment>
<comment type="catalytic activity">
    <reaction evidence="1">
        <text>(S)-lactate + NAD(+) = pyruvate + NADH + H(+)</text>
        <dbReference type="Rhea" id="RHEA:23444"/>
        <dbReference type="ChEBI" id="CHEBI:15361"/>
        <dbReference type="ChEBI" id="CHEBI:15378"/>
        <dbReference type="ChEBI" id="CHEBI:16651"/>
        <dbReference type="ChEBI" id="CHEBI:57540"/>
        <dbReference type="ChEBI" id="CHEBI:57945"/>
        <dbReference type="EC" id="1.1.1.27"/>
    </reaction>
</comment>
<comment type="activity regulation">
    <text evidence="1">Allosterically activated by fructose 1,6-bisphosphate (FBP).</text>
</comment>
<comment type="pathway">
    <text evidence="1">Fermentation; pyruvate fermentation to lactate; (S)-lactate from pyruvate: step 1/1.</text>
</comment>
<comment type="subunit">
    <text evidence="1">Homotetramer.</text>
</comment>
<comment type="subcellular location">
    <subcellularLocation>
        <location evidence="1">Cytoplasm</location>
    </subcellularLocation>
</comment>
<comment type="similarity">
    <text evidence="1">Belongs to the LDH/MDH superfamily. LDH family.</text>
</comment>
<comment type="sequence caution" evidence="2">
    <conflict type="erroneous initiation">
        <sequence resource="EMBL-CDS" id="BAC19563"/>
    </conflict>
</comment>
<organism>
    <name type="scientific">Corynebacterium efficiens (strain DSM 44549 / YS-314 / AJ 12310 / JCM 11189 / NBRC 100395)</name>
    <dbReference type="NCBI Taxonomy" id="196164"/>
    <lineage>
        <taxon>Bacteria</taxon>
        <taxon>Bacillati</taxon>
        <taxon>Actinomycetota</taxon>
        <taxon>Actinomycetes</taxon>
        <taxon>Mycobacteriales</taxon>
        <taxon>Corynebacteriaceae</taxon>
        <taxon>Corynebacterium</taxon>
    </lineage>
</organism>
<dbReference type="EC" id="1.1.1.27" evidence="1"/>
<dbReference type="EMBL" id="BA000035">
    <property type="protein sequence ID" value="BAC19563.1"/>
    <property type="status" value="ALT_INIT"/>
    <property type="molecule type" value="Genomic_DNA"/>
</dbReference>
<dbReference type="RefSeq" id="WP_035109376.1">
    <property type="nucleotide sequence ID" value="NC_004369.1"/>
</dbReference>
<dbReference type="SMR" id="Q8FLV6"/>
<dbReference type="STRING" id="196164.gene:10743201"/>
<dbReference type="KEGG" id="cef:CE2753"/>
<dbReference type="eggNOG" id="COG0039">
    <property type="taxonomic scope" value="Bacteria"/>
</dbReference>
<dbReference type="HOGENOM" id="CLU_045401_1_1_11"/>
<dbReference type="UniPathway" id="UPA00554">
    <property type="reaction ID" value="UER00611"/>
</dbReference>
<dbReference type="Proteomes" id="UP000001409">
    <property type="component" value="Chromosome"/>
</dbReference>
<dbReference type="GO" id="GO:0005737">
    <property type="term" value="C:cytoplasm"/>
    <property type="evidence" value="ECO:0007669"/>
    <property type="project" value="UniProtKB-SubCell"/>
</dbReference>
<dbReference type="GO" id="GO:0004459">
    <property type="term" value="F:L-lactate dehydrogenase activity"/>
    <property type="evidence" value="ECO:0007669"/>
    <property type="project" value="UniProtKB-UniRule"/>
</dbReference>
<dbReference type="GO" id="GO:0006096">
    <property type="term" value="P:glycolytic process"/>
    <property type="evidence" value="ECO:0007669"/>
    <property type="project" value="UniProtKB-UniRule"/>
</dbReference>
<dbReference type="GO" id="GO:0006089">
    <property type="term" value="P:lactate metabolic process"/>
    <property type="evidence" value="ECO:0007669"/>
    <property type="project" value="TreeGrafter"/>
</dbReference>
<dbReference type="CDD" id="cd05291">
    <property type="entry name" value="HicDH_like"/>
    <property type="match status" value="1"/>
</dbReference>
<dbReference type="FunFam" id="3.40.50.720:FF:000018">
    <property type="entry name" value="Malate dehydrogenase"/>
    <property type="match status" value="1"/>
</dbReference>
<dbReference type="Gene3D" id="3.90.110.10">
    <property type="entry name" value="Lactate dehydrogenase/glycoside hydrolase, family 4, C-terminal"/>
    <property type="match status" value="1"/>
</dbReference>
<dbReference type="Gene3D" id="3.40.50.720">
    <property type="entry name" value="NAD(P)-binding Rossmann-like Domain"/>
    <property type="match status" value="1"/>
</dbReference>
<dbReference type="HAMAP" id="MF_00488">
    <property type="entry name" value="Lactate_dehydrog"/>
    <property type="match status" value="1"/>
</dbReference>
<dbReference type="InterPro" id="IPR001557">
    <property type="entry name" value="L-lactate/malate_DH"/>
</dbReference>
<dbReference type="InterPro" id="IPR011304">
    <property type="entry name" value="L-lactate_DH"/>
</dbReference>
<dbReference type="InterPro" id="IPR018177">
    <property type="entry name" value="L-lactate_DH_AS"/>
</dbReference>
<dbReference type="InterPro" id="IPR022383">
    <property type="entry name" value="Lactate/malate_DH_C"/>
</dbReference>
<dbReference type="InterPro" id="IPR001236">
    <property type="entry name" value="Lactate/malate_DH_N"/>
</dbReference>
<dbReference type="InterPro" id="IPR015955">
    <property type="entry name" value="Lactate_DH/Glyco_Ohase_4_C"/>
</dbReference>
<dbReference type="InterPro" id="IPR036291">
    <property type="entry name" value="NAD(P)-bd_dom_sf"/>
</dbReference>
<dbReference type="NCBIfam" id="TIGR01771">
    <property type="entry name" value="L-LDH-NAD"/>
    <property type="match status" value="1"/>
</dbReference>
<dbReference type="NCBIfam" id="NF000824">
    <property type="entry name" value="PRK00066.1"/>
    <property type="match status" value="1"/>
</dbReference>
<dbReference type="PANTHER" id="PTHR43128">
    <property type="entry name" value="L-2-HYDROXYCARBOXYLATE DEHYDROGENASE (NAD(P)(+))"/>
    <property type="match status" value="1"/>
</dbReference>
<dbReference type="PANTHER" id="PTHR43128:SF16">
    <property type="entry name" value="L-LACTATE DEHYDROGENASE"/>
    <property type="match status" value="1"/>
</dbReference>
<dbReference type="Pfam" id="PF02866">
    <property type="entry name" value="Ldh_1_C"/>
    <property type="match status" value="1"/>
</dbReference>
<dbReference type="Pfam" id="PF00056">
    <property type="entry name" value="Ldh_1_N"/>
    <property type="match status" value="1"/>
</dbReference>
<dbReference type="PIRSF" id="PIRSF000102">
    <property type="entry name" value="Lac_mal_DH"/>
    <property type="match status" value="1"/>
</dbReference>
<dbReference type="PRINTS" id="PR00086">
    <property type="entry name" value="LLDHDRGNASE"/>
</dbReference>
<dbReference type="SUPFAM" id="SSF56327">
    <property type="entry name" value="LDH C-terminal domain-like"/>
    <property type="match status" value="1"/>
</dbReference>
<dbReference type="SUPFAM" id="SSF51735">
    <property type="entry name" value="NAD(P)-binding Rossmann-fold domains"/>
    <property type="match status" value="1"/>
</dbReference>
<dbReference type="PROSITE" id="PS00064">
    <property type="entry name" value="L_LDH"/>
    <property type="match status" value="1"/>
</dbReference>